<accession>Q83GN2</accession>
<dbReference type="EC" id="6.3.2.9" evidence="1"/>
<dbReference type="EMBL" id="AE014184">
    <property type="protein sequence ID" value="AAO44323.1"/>
    <property type="status" value="ALT_INIT"/>
    <property type="molecule type" value="Genomic_DNA"/>
</dbReference>
<dbReference type="RefSeq" id="WP_038103895.1">
    <property type="nucleotide sequence ID" value="NC_004572.3"/>
</dbReference>
<dbReference type="SMR" id="Q83GN2"/>
<dbReference type="STRING" id="203267.TWT_226"/>
<dbReference type="KEGG" id="twh:TWT_226"/>
<dbReference type="eggNOG" id="COG0771">
    <property type="taxonomic scope" value="Bacteria"/>
</dbReference>
<dbReference type="HOGENOM" id="CLU_032540_0_0_11"/>
<dbReference type="OrthoDB" id="9809796at2"/>
<dbReference type="UniPathway" id="UPA00219"/>
<dbReference type="Proteomes" id="UP000002200">
    <property type="component" value="Chromosome"/>
</dbReference>
<dbReference type="GO" id="GO:0005737">
    <property type="term" value="C:cytoplasm"/>
    <property type="evidence" value="ECO:0007669"/>
    <property type="project" value="UniProtKB-SubCell"/>
</dbReference>
<dbReference type="GO" id="GO:0005524">
    <property type="term" value="F:ATP binding"/>
    <property type="evidence" value="ECO:0007669"/>
    <property type="project" value="UniProtKB-UniRule"/>
</dbReference>
<dbReference type="GO" id="GO:0004326">
    <property type="term" value="F:tetrahydrofolylpolyglutamate synthase activity"/>
    <property type="evidence" value="ECO:0007669"/>
    <property type="project" value="InterPro"/>
</dbReference>
<dbReference type="GO" id="GO:0008764">
    <property type="term" value="F:UDP-N-acetylmuramoylalanine-D-glutamate ligase activity"/>
    <property type="evidence" value="ECO:0007669"/>
    <property type="project" value="UniProtKB-UniRule"/>
</dbReference>
<dbReference type="GO" id="GO:0051301">
    <property type="term" value="P:cell division"/>
    <property type="evidence" value="ECO:0007669"/>
    <property type="project" value="UniProtKB-KW"/>
</dbReference>
<dbReference type="GO" id="GO:0071555">
    <property type="term" value="P:cell wall organization"/>
    <property type="evidence" value="ECO:0007669"/>
    <property type="project" value="UniProtKB-KW"/>
</dbReference>
<dbReference type="GO" id="GO:0009252">
    <property type="term" value="P:peptidoglycan biosynthetic process"/>
    <property type="evidence" value="ECO:0007669"/>
    <property type="project" value="UniProtKB-UniRule"/>
</dbReference>
<dbReference type="GO" id="GO:0008360">
    <property type="term" value="P:regulation of cell shape"/>
    <property type="evidence" value="ECO:0007669"/>
    <property type="project" value="UniProtKB-KW"/>
</dbReference>
<dbReference type="Gene3D" id="3.90.190.20">
    <property type="entry name" value="Mur ligase, C-terminal domain"/>
    <property type="match status" value="1"/>
</dbReference>
<dbReference type="Gene3D" id="3.40.1190.10">
    <property type="entry name" value="Mur-like, catalytic domain"/>
    <property type="match status" value="1"/>
</dbReference>
<dbReference type="Gene3D" id="3.40.50.720">
    <property type="entry name" value="NAD(P)-binding Rossmann-like Domain"/>
    <property type="match status" value="1"/>
</dbReference>
<dbReference type="HAMAP" id="MF_00639">
    <property type="entry name" value="MurD"/>
    <property type="match status" value="1"/>
</dbReference>
<dbReference type="InterPro" id="IPR018109">
    <property type="entry name" value="Folylpolyglutamate_synth_CS"/>
</dbReference>
<dbReference type="InterPro" id="IPR036565">
    <property type="entry name" value="Mur-like_cat_sf"/>
</dbReference>
<dbReference type="InterPro" id="IPR004101">
    <property type="entry name" value="Mur_ligase_C"/>
</dbReference>
<dbReference type="InterPro" id="IPR036615">
    <property type="entry name" value="Mur_ligase_C_dom_sf"/>
</dbReference>
<dbReference type="InterPro" id="IPR013221">
    <property type="entry name" value="Mur_ligase_cen"/>
</dbReference>
<dbReference type="InterPro" id="IPR005762">
    <property type="entry name" value="MurD"/>
</dbReference>
<dbReference type="NCBIfam" id="TIGR01087">
    <property type="entry name" value="murD"/>
    <property type="match status" value="1"/>
</dbReference>
<dbReference type="PANTHER" id="PTHR43692">
    <property type="entry name" value="UDP-N-ACETYLMURAMOYLALANINE--D-GLUTAMATE LIGASE"/>
    <property type="match status" value="1"/>
</dbReference>
<dbReference type="PANTHER" id="PTHR43692:SF1">
    <property type="entry name" value="UDP-N-ACETYLMURAMOYLALANINE--D-GLUTAMATE LIGASE"/>
    <property type="match status" value="1"/>
</dbReference>
<dbReference type="Pfam" id="PF02875">
    <property type="entry name" value="Mur_ligase_C"/>
    <property type="match status" value="1"/>
</dbReference>
<dbReference type="Pfam" id="PF08245">
    <property type="entry name" value="Mur_ligase_M"/>
    <property type="match status" value="1"/>
</dbReference>
<dbReference type="Pfam" id="PF21799">
    <property type="entry name" value="MurD-like_N"/>
    <property type="match status" value="1"/>
</dbReference>
<dbReference type="SUPFAM" id="SSF51984">
    <property type="entry name" value="MurCD N-terminal domain"/>
    <property type="match status" value="1"/>
</dbReference>
<dbReference type="SUPFAM" id="SSF53623">
    <property type="entry name" value="MurD-like peptide ligases, catalytic domain"/>
    <property type="match status" value="1"/>
</dbReference>
<dbReference type="SUPFAM" id="SSF53244">
    <property type="entry name" value="MurD-like peptide ligases, peptide-binding domain"/>
    <property type="match status" value="1"/>
</dbReference>
<name>MURD_TROWT</name>
<proteinExistence type="inferred from homology"/>
<gene>
    <name evidence="1" type="primary">murD</name>
    <name type="ordered locus">TWT_226</name>
</gene>
<protein>
    <recommendedName>
        <fullName evidence="1">UDP-N-acetylmuramoylalanine--D-glutamate ligase</fullName>
        <ecNumber evidence="1">6.3.2.9</ecNumber>
    </recommendedName>
    <alternativeName>
        <fullName evidence="1">D-glutamic acid-adding enzyme</fullName>
    </alternativeName>
    <alternativeName>
        <fullName evidence="1">UDP-N-acetylmuramoyl-L-alanyl-D-glutamate synthetase</fullName>
    </alternativeName>
</protein>
<comment type="function">
    <text evidence="1">Cell wall formation. Catalyzes the addition of glutamate to the nucleotide precursor UDP-N-acetylmuramoyl-L-alanine (UMA).</text>
</comment>
<comment type="catalytic activity">
    <reaction evidence="1">
        <text>UDP-N-acetyl-alpha-D-muramoyl-L-alanine + D-glutamate + ATP = UDP-N-acetyl-alpha-D-muramoyl-L-alanyl-D-glutamate + ADP + phosphate + H(+)</text>
        <dbReference type="Rhea" id="RHEA:16429"/>
        <dbReference type="ChEBI" id="CHEBI:15378"/>
        <dbReference type="ChEBI" id="CHEBI:29986"/>
        <dbReference type="ChEBI" id="CHEBI:30616"/>
        <dbReference type="ChEBI" id="CHEBI:43474"/>
        <dbReference type="ChEBI" id="CHEBI:83898"/>
        <dbReference type="ChEBI" id="CHEBI:83900"/>
        <dbReference type="ChEBI" id="CHEBI:456216"/>
        <dbReference type="EC" id="6.3.2.9"/>
    </reaction>
</comment>
<comment type="pathway">
    <text evidence="1">Cell wall biogenesis; peptidoglycan biosynthesis.</text>
</comment>
<comment type="subcellular location">
    <subcellularLocation>
        <location evidence="1">Cytoplasm</location>
    </subcellularLocation>
</comment>
<comment type="similarity">
    <text evidence="1">Belongs to the MurCDEF family.</text>
</comment>
<comment type="sequence caution" evidence="2">
    <conflict type="erroneous initiation">
        <sequence resource="EMBL-CDS" id="AAO44323"/>
    </conflict>
</comment>
<feature type="chain" id="PRO_0000109118" description="UDP-N-acetylmuramoylalanine--D-glutamate ligase">
    <location>
        <begin position="1"/>
        <end position="480"/>
    </location>
</feature>
<feature type="binding site" evidence="1">
    <location>
        <begin position="127"/>
        <end position="133"/>
    </location>
    <ligand>
        <name>ATP</name>
        <dbReference type="ChEBI" id="CHEBI:30616"/>
    </ligand>
</feature>
<evidence type="ECO:0000255" key="1">
    <source>
        <dbReference type="HAMAP-Rule" id="MF_00639"/>
    </source>
</evidence>
<evidence type="ECO:0000305" key="2"/>
<reference key="1">
    <citation type="journal article" date="2003" name="Genome Res.">
        <title>Tropheryma whipplei twist: a human pathogenic Actinobacteria with a reduced genome.</title>
        <authorList>
            <person name="Raoult D."/>
            <person name="Ogata H."/>
            <person name="Audic S."/>
            <person name="Robert C."/>
            <person name="Suhre K."/>
            <person name="Drancourt M."/>
            <person name="Claverie J.-M."/>
        </authorList>
    </citation>
    <scope>NUCLEOTIDE SEQUENCE [LARGE SCALE GENOMIC DNA]</scope>
    <source>
        <strain>Twist</strain>
    </source>
</reference>
<sequence length="480" mass="52236">MSRVEGLTSWYSDWQGLSAAILGIGVSGFAAADSLRELGVDVTVYAPEKHTRYNKLLDAIGARYVCAYLDELCEVDVDFIVVSPGISPDNPVIKRLRDRQIPILSEIELAWRVRDKVNTCPWILITGTNGKTTTALLTGSMLAKDGARVAVCGNIGTPVLDAVRNPKGFDYLVVELSSFQLSLLPMHGNGAVKGFSSACVNLDEDHLEWHGAKELYYCAKSRVYHGTTGFCVYNLDDEETKKMVEQACVARNVRAIGFGLCVPDVGQVGIVDGILCDRAFLSARKDSALEITSVEKLEKNKLSMRHIISDVLCAVALARSVETNPLSISRALDEFCLSPHRTEVVAKEMGVMWVNDSKATNPHAVIASLSNFSRVILIFGGLMKGVDVSGIFDRFYETIKAVVVIGKNQSFVGNIKCKKIVCIPDSNDPMSEAVAAADLLATPGDTVLLSPGGSSFDQFESYEHRGNCFINAVKDLVKRK</sequence>
<keyword id="KW-0067">ATP-binding</keyword>
<keyword id="KW-0131">Cell cycle</keyword>
<keyword id="KW-0132">Cell division</keyword>
<keyword id="KW-0133">Cell shape</keyword>
<keyword id="KW-0961">Cell wall biogenesis/degradation</keyword>
<keyword id="KW-0963">Cytoplasm</keyword>
<keyword id="KW-0436">Ligase</keyword>
<keyword id="KW-0547">Nucleotide-binding</keyword>
<keyword id="KW-0573">Peptidoglycan synthesis</keyword>
<keyword id="KW-1185">Reference proteome</keyword>
<organism>
    <name type="scientific">Tropheryma whipplei (strain Twist)</name>
    <name type="common">Whipple's bacillus</name>
    <dbReference type="NCBI Taxonomy" id="203267"/>
    <lineage>
        <taxon>Bacteria</taxon>
        <taxon>Bacillati</taxon>
        <taxon>Actinomycetota</taxon>
        <taxon>Actinomycetes</taxon>
        <taxon>Micrococcales</taxon>
        <taxon>Tropherymataceae</taxon>
        <taxon>Tropheryma</taxon>
    </lineage>
</organism>